<feature type="chain" id="PRO_0000245466" description="3-hydroxyanthranilate 3,4-dioxygenase">
    <location>
        <begin position="1"/>
        <end position="287"/>
    </location>
</feature>
<feature type="region of interest" description="Domain A (catalytic)" evidence="1">
    <location>
        <begin position="1"/>
        <end position="163"/>
    </location>
</feature>
<feature type="region of interest" description="Linker" evidence="1">
    <location>
        <begin position="164"/>
        <end position="180"/>
    </location>
</feature>
<feature type="region of interest" description="Domain B" evidence="1">
    <location>
        <begin position="181"/>
        <end position="287"/>
    </location>
</feature>
<feature type="binding site" evidence="1">
    <location>
        <position position="46"/>
    </location>
    <ligand>
        <name>O2</name>
        <dbReference type="ChEBI" id="CHEBI:15379"/>
    </ligand>
</feature>
<feature type="binding site" evidence="1">
    <location>
        <position position="50"/>
    </location>
    <ligand>
        <name>Fe cation</name>
        <dbReference type="ChEBI" id="CHEBI:24875"/>
        <note>catalytic</note>
    </ligand>
</feature>
<feature type="binding site" evidence="1">
    <location>
        <position position="56"/>
    </location>
    <ligand>
        <name>Fe cation</name>
        <dbReference type="ChEBI" id="CHEBI:24875"/>
        <note>catalytic</note>
    </ligand>
</feature>
<feature type="binding site" evidence="1">
    <location>
        <position position="56"/>
    </location>
    <ligand>
        <name>substrate</name>
    </ligand>
</feature>
<feature type="binding site" evidence="1">
    <location>
        <position position="94"/>
    </location>
    <ligand>
        <name>Fe cation</name>
        <dbReference type="ChEBI" id="CHEBI:24875"/>
        <note>catalytic</note>
    </ligand>
</feature>
<feature type="binding site" evidence="1">
    <location>
        <position position="98"/>
    </location>
    <ligand>
        <name>substrate</name>
    </ligand>
</feature>
<feature type="binding site" evidence="1">
    <location>
        <position position="108"/>
    </location>
    <ligand>
        <name>substrate</name>
    </ligand>
</feature>
<name>3HAO_DANRE</name>
<proteinExistence type="evidence at transcript level"/>
<reference key="1">
    <citation type="submission" date="2004-11" db="EMBL/GenBank/DDBJ databases">
        <authorList>
            <consortium name="NIH - Zebrafish Gene Collection (ZGC) project"/>
        </authorList>
    </citation>
    <scope>NUCLEOTIDE SEQUENCE [LARGE SCALE MRNA]</scope>
    <source>
        <tissue>Liver</tissue>
    </source>
</reference>
<keyword id="KW-0963">Cytoplasm</keyword>
<keyword id="KW-0223">Dioxygenase</keyword>
<keyword id="KW-0408">Iron</keyword>
<keyword id="KW-0479">Metal-binding</keyword>
<keyword id="KW-0560">Oxidoreductase</keyword>
<keyword id="KW-0662">Pyridine nucleotide biosynthesis</keyword>
<keyword id="KW-1185">Reference proteome</keyword>
<sequence>MTNQSLHVNIDKWIAENETSFLPPVCNKLMFFYQLNIMYVGGPNVRKDYHIEEGEELFYQVRGDMVLKVIENGKHKDVHIREGEMFLLPARIPHSPQRQANTVGLVIERRRLSKETDGLRYFVANSTEVLFERWFYCENLGTQLVPIIKEFMDSKENETGKPDPANPIKPAPYPLNTMNVMTPFSFREWVEKQKPVLASGCPVDMFGEQFETETLLFGSGTSANKRRTDGWIWQLEGLSNVFMNGKEYSLTAGDCLLIFGETEYKWQRSQDCVALYVAQDPDRKRPY</sequence>
<accession>Q5U3F8</accession>
<comment type="function">
    <text evidence="1">Catalyzes the oxidative ring opening of 3-hydroxyanthranilate to 2-amino-3-carboxymuconate semialdehyde, which spontaneously cyclizes to quinolinate.</text>
</comment>
<comment type="catalytic activity">
    <reaction evidence="1">
        <text>3-hydroxyanthranilate + O2 = (2Z,4Z)-2-amino-3-carboxymuconate 6-semialdehyde</text>
        <dbReference type="Rhea" id="RHEA:17953"/>
        <dbReference type="ChEBI" id="CHEBI:15379"/>
        <dbReference type="ChEBI" id="CHEBI:36559"/>
        <dbReference type="ChEBI" id="CHEBI:77612"/>
        <dbReference type="EC" id="1.13.11.6"/>
    </reaction>
</comment>
<comment type="cofactor">
    <cofactor evidence="1">
        <name>Fe(2+)</name>
        <dbReference type="ChEBI" id="CHEBI:29033"/>
    </cofactor>
</comment>
<comment type="pathway">
    <text evidence="1">Cofactor biosynthesis; NAD(+) biosynthesis; quinolinate from L-kynurenine: step 3/3.</text>
</comment>
<comment type="subunit">
    <text evidence="1">Monomer.</text>
</comment>
<comment type="subcellular location">
    <subcellularLocation>
        <location evidence="1">Cytoplasm</location>
        <location evidence="1">Cytosol</location>
    </subcellularLocation>
</comment>
<comment type="similarity">
    <text evidence="1">Belongs to the 3-HAO family.</text>
</comment>
<protein>
    <recommendedName>
        <fullName evidence="1">3-hydroxyanthranilate 3,4-dioxygenase</fullName>
        <ecNumber evidence="1">1.13.11.6</ecNumber>
    </recommendedName>
    <alternativeName>
        <fullName evidence="1">3-hydroxyanthranilate oxygenase</fullName>
        <shortName evidence="1">3-HAO</shortName>
    </alternativeName>
    <alternativeName>
        <fullName evidence="1">3-hydroxyanthranilic acid dioxygenase</fullName>
        <shortName evidence="1">HAD</shortName>
    </alternativeName>
</protein>
<evidence type="ECO:0000255" key="1">
    <source>
        <dbReference type="HAMAP-Rule" id="MF_03019"/>
    </source>
</evidence>
<organism>
    <name type="scientific">Danio rerio</name>
    <name type="common">Zebrafish</name>
    <name type="synonym">Brachydanio rerio</name>
    <dbReference type="NCBI Taxonomy" id="7955"/>
    <lineage>
        <taxon>Eukaryota</taxon>
        <taxon>Metazoa</taxon>
        <taxon>Chordata</taxon>
        <taxon>Craniata</taxon>
        <taxon>Vertebrata</taxon>
        <taxon>Euteleostomi</taxon>
        <taxon>Actinopterygii</taxon>
        <taxon>Neopterygii</taxon>
        <taxon>Teleostei</taxon>
        <taxon>Ostariophysi</taxon>
        <taxon>Cypriniformes</taxon>
        <taxon>Danionidae</taxon>
        <taxon>Danioninae</taxon>
        <taxon>Danio</taxon>
    </lineage>
</organism>
<gene>
    <name type="primary">haao</name>
    <name type="ORF">zgc:103585</name>
</gene>
<dbReference type="EC" id="1.13.11.6" evidence="1"/>
<dbReference type="EMBL" id="BC085560">
    <property type="protein sequence ID" value="AAH85560.1"/>
    <property type="molecule type" value="mRNA"/>
</dbReference>
<dbReference type="RefSeq" id="NP_001007391.1">
    <property type="nucleotide sequence ID" value="NM_001007390.1"/>
</dbReference>
<dbReference type="SMR" id="Q5U3F8"/>
<dbReference type="FunCoup" id="Q5U3F8">
    <property type="interactions" value="369"/>
</dbReference>
<dbReference type="STRING" id="7955.ENSDARP00000091014"/>
<dbReference type="PaxDb" id="7955-ENSDARP00000091014"/>
<dbReference type="GeneID" id="492518"/>
<dbReference type="KEGG" id="dre:492518"/>
<dbReference type="AGR" id="ZFIN:ZDB-GENE-041114-89"/>
<dbReference type="CTD" id="23498"/>
<dbReference type="ZFIN" id="ZDB-GENE-041114-89">
    <property type="gene designation" value="haao"/>
</dbReference>
<dbReference type="eggNOG" id="KOG3995">
    <property type="taxonomic scope" value="Eukaryota"/>
</dbReference>
<dbReference type="InParanoid" id="Q5U3F8"/>
<dbReference type="OrthoDB" id="204928at2759"/>
<dbReference type="PhylomeDB" id="Q5U3F8"/>
<dbReference type="Reactome" id="R-DRE-71240">
    <property type="pathway name" value="Tryptophan catabolism"/>
</dbReference>
<dbReference type="UniPathway" id="UPA00253">
    <property type="reaction ID" value="UER00330"/>
</dbReference>
<dbReference type="PRO" id="PR:Q5U3F8"/>
<dbReference type="Proteomes" id="UP000000437">
    <property type="component" value="Chromosome 13"/>
</dbReference>
<dbReference type="GO" id="GO:0005737">
    <property type="term" value="C:cytoplasm"/>
    <property type="evidence" value="ECO:0000318"/>
    <property type="project" value="GO_Central"/>
</dbReference>
<dbReference type="GO" id="GO:0005829">
    <property type="term" value="C:cytosol"/>
    <property type="evidence" value="ECO:0007669"/>
    <property type="project" value="UniProtKB-SubCell"/>
</dbReference>
<dbReference type="GO" id="GO:0000334">
    <property type="term" value="F:3-hydroxyanthranilate 3,4-dioxygenase activity"/>
    <property type="evidence" value="ECO:0000250"/>
    <property type="project" value="UniProtKB"/>
</dbReference>
<dbReference type="GO" id="GO:0008198">
    <property type="term" value="F:ferrous iron binding"/>
    <property type="evidence" value="ECO:0000250"/>
    <property type="project" value="UniProtKB"/>
</dbReference>
<dbReference type="GO" id="GO:0034354">
    <property type="term" value="P:'de novo' NAD biosynthetic process from L-tryptophan"/>
    <property type="evidence" value="ECO:0000318"/>
    <property type="project" value="GO_Central"/>
</dbReference>
<dbReference type="GO" id="GO:0043420">
    <property type="term" value="P:anthranilate metabolic process"/>
    <property type="evidence" value="ECO:0007669"/>
    <property type="project" value="UniProtKB-UniRule"/>
</dbReference>
<dbReference type="GO" id="GO:0006569">
    <property type="term" value="P:L-tryptophan catabolic process"/>
    <property type="evidence" value="ECO:0007669"/>
    <property type="project" value="UniProtKB-UniRule"/>
</dbReference>
<dbReference type="GO" id="GO:0009435">
    <property type="term" value="P:NAD biosynthetic process"/>
    <property type="evidence" value="ECO:0000250"/>
    <property type="project" value="UniProtKB"/>
</dbReference>
<dbReference type="GO" id="GO:0019805">
    <property type="term" value="P:quinolinate biosynthetic process"/>
    <property type="evidence" value="ECO:0000250"/>
    <property type="project" value="UniProtKB"/>
</dbReference>
<dbReference type="GO" id="GO:0046874">
    <property type="term" value="P:quinolinate metabolic process"/>
    <property type="evidence" value="ECO:0000318"/>
    <property type="project" value="GO_Central"/>
</dbReference>
<dbReference type="CDD" id="cd06123">
    <property type="entry name" value="cupin_HAO"/>
    <property type="match status" value="1"/>
</dbReference>
<dbReference type="FunFam" id="2.60.120.10:FF:000077">
    <property type="entry name" value="3-hydroxyanthranilate 3,4-dioxygenase"/>
    <property type="match status" value="1"/>
</dbReference>
<dbReference type="Gene3D" id="2.60.120.10">
    <property type="entry name" value="Jelly Rolls"/>
    <property type="match status" value="1"/>
</dbReference>
<dbReference type="HAMAP" id="MF_00825">
    <property type="entry name" value="3_HAO"/>
    <property type="match status" value="1"/>
</dbReference>
<dbReference type="InterPro" id="IPR010329">
    <property type="entry name" value="3hydroanth_dOase"/>
</dbReference>
<dbReference type="InterPro" id="IPR016700">
    <property type="entry name" value="3hydroanth_dOase_met"/>
</dbReference>
<dbReference type="InterPro" id="IPR014710">
    <property type="entry name" value="RmlC-like_jellyroll"/>
</dbReference>
<dbReference type="InterPro" id="IPR011051">
    <property type="entry name" value="RmlC_Cupin_sf"/>
</dbReference>
<dbReference type="NCBIfam" id="TIGR03037">
    <property type="entry name" value="anthran_nbaC"/>
    <property type="match status" value="1"/>
</dbReference>
<dbReference type="PANTHER" id="PTHR15497">
    <property type="entry name" value="3-HYDROXYANTHRANILATE 3,4-DIOXYGENASE"/>
    <property type="match status" value="1"/>
</dbReference>
<dbReference type="PANTHER" id="PTHR15497:SF1">
    <property type="entry name" value="3-HYDROXYANTHRANILATE 3,4-DIOXYGENASE"/>
    <property type="match status" value="1"/>
</dbReference>
<dbReference type="Pfam" id="PF06052">
    <property type="entry name" value="3-HAO"/>
    <property type="match status" value="1"/>
</dbReference>
<dbReference type="PIRSF" id="PIRSF017681">
    <property type="entry name" value="3hydroanth_dOase_animal"/>
    <property type="match status" value="1"/>
</dbReference>
<dbReference type="SUPFAM" id="SSF51182">
    <property type="entry name" value="RmlC-like cupins"/>
    <property type="match status" value="2"/>
</dbReference>